<protein>
    <recommendedName>
        <fullName>Uncharacterized protein YbfE</fullName>
    </recommendedName>
</protein>
<reference key="1">
    <citation type="journal article" date="2001" name="Nature">
        <title>Genome sequence of enterohaemorrhagic Escherichia coli O157:H7.</title>
        <authorList>
            <person name="Perna N.T."/>
            <person name="Plunkett G. III"/>
            <person name="Burland V."/>
            <person name="Mau B."/>
            <person name="Glasner J.D."/>
            <person name="Rose D.J."/>
            <person name="Mayhew G.F."/>
            <person name="Evans P.S."/>
            <person name="Gregor J."/>
            <person name="Kirkpatrick H.A."/>
            <person name="Posfai G."/>
            <person name="Hackett J."/>
            <person name="Klink S."/>
            <person name="Boutin A."/>
            <person name="Shao Y."/>
            <person name="Miller L."/>
            <person name="Grotbeck E.J."/>
            <person name="Davis N.W."/>
            <person name="Lim A."/>
            <person name="Dimalanta E.T."/>
            <person name="Potamousis K."/>
            <person name="Apodaca J."/>
            <person name="Anantharaman T.S."/>
            <person name="Lin J."/>
            <person name="Yen G."/>
            <person name="Schwartz D.C."/>
            <person name="Welch R.A."/>
            <person name="Blattner F.R."/>
        </authorList>
    </citation>
    <scope>NUCLEOTIDE SEQUENCE [LARGE SCALE GENOMIC DNA]</scope>
    <source>
        <strain>O157:H7 / EDL933 / ATCC 700927 / EHEC</strain>
    </source>
</reference>
<reference key="2">
    <citation type="journal article" date="2001" name="DNA Res.">
        <title>Complete genome sequence of enterohemorrhagic Escherichia coli O157:H7 and genomic comparison with a laboratory strain K-12.</title>
        <authorList>
            <person name="Hayashi T."/>
            <person name="Makino K."/>
            <person name="Ohnishi M."/>
            <person name="Kurokawa K."/>
            <person name="Ishii K."/>
            <person name="Yokoyama K."/>
            <person name="Han C.-G."/>
            <person name="Ohtsubo E."/>
            <person name="Nakayama K."/>
            <person name="Murata T."/>
            <person name="Tanaka M."/>
            <person name="Tobe T."/>
            <person name="Iida T."/>
            <person name="Takami H."/>
            <person name="Honda T."/>
            <person name="Sasakawa C."/>
            <person name="Ogasawara N."/>
            <person name="Yasunaga T."/>
            <person name="Kuhara S."/>
            <person name="Shiba T."/>
            <person name="Hattori M."/>
            <person name="Shinagawa H."/>
        </authorList>
    </citation>
    <scope>NUCLEOTIDE SEQUENCE [LARGE SCALE GENOMIC DNA]</scope>
    <source>
        <strain>O157:H7 / Sakai / RIMD 0509952 / EHEC</strain>
    </source>
</reference>
<organism>
    <name type="scientific">Escherichia coli O157:H7</name>
    <dbReference type="NCBI Taxonomy" id="83334"/>
    <lineage>
        <taxon>Bacteria</taxon>
        <taxon>Pseudomonadati</taxon>
        <taxon>Pseudomonadota</taxon>
        <taxon>Gammaproteobacteria</taxon>
        <taxon>Enterobacterales</taxon>
        <taxon>Enterobacteriaceae</taxon>
        <taxon>Escherichia</taxon>
    </lineage>
</organism>
<sequence length="97" mass="11280">MAKEQTDRTTLDLFAHERRPGRPKTNPLSRDEQLRINKRNQLKRDKVRGLKRVELKLNAEAVEALNELAESRNMSRSELIEEMLMQQLAALRSQGIV</sequence>
<dbReference type="EMBL" id="AE005174">
    <property type="protein sequence ID" value="AAG55008.2"/>
    <property type="molecule type" value="Genomic_DNA"/>
</dbReference>
<dbReference type="EMBL" id="BA000007">
    <property type="protein sequence ID" value="BAB34139.2"/>
    <property type="molecule type" value="Genomic_DNA"/>
</dbReference>
<dbReference type="PIR" id="D85568">
    <property type="entry name" value="D85568"/>
</dbReference>
<dbReference type="PIR" id="D90718">
    <property type="entry name" value="D90718"/>
</dbReference>
<dbReference type="RefSeq" id="NP_308743.1">
    <property type="nucleotide sequence ID" value="NC_002695.1"/>
</dbReference>
<dbReference type="RefSeq" id="WP_001300829.1">
    <property type="nucleotide sequence ID" value="NZ_VOAI01000012.1"/>
</dbReference>
<dbReference type="SMR" id="P0AAU8"/>
<dbReference type="STRING" id="155864.Z0834"/>
<dbReference type="GeneID" id="917085"/>
<dbReference type="GeneID" id="93776799"/>
<dbReference type="KEGG" id="ece:Z0834"/>
<dbReference type="KEGG" id="ecs:ECs_0716"/>
<dbReference type="PATRIC" id="fig|386585.9.peg.832"/>
<dbReference type="eggNOG" id="ENOG5032TX0">
    <property type="taxonomic scope" value="Bacteria"/>
</dbReference>
<dbReference type="Proteomes" id="UP000000558">
    <property type="component" value="Chromosome"/>
</dbReference>
<dbReference type="Proteomes" id="UP000002519">
    <property type="component" value="Chromosome"/>
</dbReference>
<dbReference type="GO" id="GO:0006355">
    <property type="term" value="P:regulation of DNA-templated transcription"/>
    <property type="evidence" value="ECO:0007669"/>
    <property type="project" value="InterPro"/>
</dbReference>
<dbReference type="CDD" id="cd21631">
    <property type="entry name" value="RHH_CopG_NikR-like"/>
    <property type="match status" value="1"/>
</dbReference>
<dbReference type="InterPro" id="IPR002145">
    <property type="entry name" value="CopG"/>
</dbReference>
<dbReference type="InterPro" id="IPR010985">
    <property type="entry name" value="Ribbon_hlx_hlx"/>
</dbReference>
<dbReference type="NCBIfam" id="NF008671">
    <property type="entry name" value="PRK11675.1"/>
    <property type="match status" value="1"/>
</dbReference>
<dbReference type="Pfam" id="PF01402">
    <property type="entry name" value="RHH_1"/>
    <property type="match status" value="1"/>
</dbReference>
<dbReference type="SUPFAM" id="SSF47598">
    <property type="entry name" value="Ribbon-helix-helix"/>
    <property type="match status" value="1"/>
</dbReference>
<evidence type="ECO:0000256" key="1">
    <source>
        <dbReference type="SAM" id="MobiDB-lite"/>
    </source>
</evidence>
<proteinExistence type="predicted"/>
<accession>P0AAU8</accession>
<accession>P75735</accession>
<feature type="chain" id="PRO_0000168689" description="Uncharacterized protein YbfE">
    <location>
        <begin position="1"/>
        <end position="97"/>
    </location>
</feature>
<feature type="region of interest" description="Disordered" evidence="1">
    <location>
        <begin position="1"/>
        <end position="30"/>
    </location>
</feature>
<feature type="compositionally biased region" description="Basic and acidic residues" evidence="1">
    <location>
        <begin position="1"/>
        <end position="20"/>
    </location>
</feature>
<gene>
    <name type="primary">ybfE</name>
    <name type="ordered locus">Z0834</name>
    <name type="ordered locus">ECs0716</name>
</gene>
<keyword id="KW-1185">Reference proteome</keyword>
<name>YBFE_ECO57</name>